<organism>
    <name type="scientific">Caenorhabditis elegans</name>
    <dbReference type="NCBI Taxonomy" id="6239"/>
    <lineage>
        <taxon>Eukaryota</taxon>
        <taxon>Metazoa</taxon>
        <taxon>Ecdysozoa</taxon>
        <taxon>Nematoda</taxon>
        <taxon>Chromadorea</taxon>
        <taxon>Rhabditida</taxon>
        <taxon>Rhabditina</taxon>
        <taxon>Rhabditomorpha</taxon>
        <taxon>Rhabditoidea</taxon>
        <taxon>Rhabditidae</taxon>
        <taxon>Peloderinae</taxon>
        <taxon>Caenorhabditis</taxon>
    </lineage>
</organism>
<accession>Q22431</accession>
<sequence length="482" mass="55808">MDDEDMSCTSGDDYAGYGDEDYYNEADVDAADDVAVTPTHSEEADYECLSVNQVERVFIDGVNSLVSRISINEKFARILLQANHWDVDKIARLVRNDRNDFLRKCHIDAKPEPKRKLSSTQSVLAKGYCSVCAMDGYTELPHLTCGHCFCEHCWKSHVESRLSEGVASRIECMESECEVYAPSEFVLSIIKNSPVIKLKYERFLLRDMVNSHPHLKFCVGNECPVIIRSTEVKPKRVTCMQCHTSFCVKCGADYHAPTSCETIKQWMTKCADDSETANYISAHTKDCPQCHSCIEKAGGCNHIQCTRCRHHFCWMCFGDWKSHGSEYYECSRYKENPSVAAEANHVKARRALEKYLHYFERFENHSKSLKMEEELRDKIRKKIDDKVNEHNGTWIDWQYLHKSVSLLTKCRYTLQYTYPFAYFLSATPRKNLFEYQQAQLEKEVEELAWAVERADGTARGALEAHMHRAEHKRQTLLHDFFF</sequence>
<keyword id="KW-0175">Coiled coil</keyword>
<keyword id="KW-0479">Metal-binding</keyword>
<keyword id="KW-0539">Nucleus</keyword>
<keyword id="KW-1185">Reference proteome</keyword>
<keyword id="KW-0677">Repeat</keyword>
<keyword id="KW-0808">Transferase</keyword>
<keyword id="KW-0833">Ubl conjugation pathway</keyword>
<keyword id="KW-0862">Zinc</keyword>
<keyword id="KW-0863">Zinc-finger</keyword>
<evidence type="ECO:0000250" key="1"/>
<evidence type="ECO:0000250" key="2">
    <source>
        <dbReference type="UniProtKB" id="Q9Y4X5"/>
    </source>
</evidence>
<evidence type="ECO:0000255" key="3"/>
<evidence type="ECO:0000255" key="4">
    <source>
        <dbReference type="PROSITE-ProRule" id="PRU01221"/>
    </source>
</evidence>
<evidence type="ECO:0000305" key="5"/>
<evidence type="ECO:0000312" key="6">
    <source>
        <dbReference type="WormBase" id="T12E12.1"/>
    </source>
</evidence>
<name>ARI2_CAEEL</name>
<reference key="1">
    <citation type="journal article" date="1998" name="Science">
        <title>Genome sequence of the nematode C. elegans: a platform for investigating biology.</title>
        <authorList>
            <consortium name="The C. elegans sequencing consortium"/>
        </authorList>
    </citation>
    <scope>NUCLEOTIDE SEQUENCE [LARGE SCALE GENOMIC DNA]</scope>
    <source>
        <strain>Bristol N2</strain>
    </source>
</reference>
<gene>
    <name evidence="6" type="primary">ari-2</name>
    <name evidence="6" type="ORF">T12E12.1</name>
</gene>
<feature type="chain" id="PRO_0000055758" description="Potential E3 ubiquitin-protein ligase ariadne-2">
    <location>
        <begin position="1"/>
        <end position="482"/>
    </location>
</feature>
<feature type="zinc finger region" description="RING-type 1" evidence="4">
    <location>
        <begin position="129"/>
        <end position="177"/>
    </location>
</feature>
<feature type="zinc finger region" description="IBR-type" evidence="4">
    <location>
        <begin position="198"/>
        <end position="260"/>
    </location>
</feature>
<feature type="zinc finger region" description="RING-type 2; atypical" evidence="4">
    <location>
        <begin position="287"/>
        <end position="316"/>
    </location>
</feature>
<feature type="region of interest" description="TRIAD supradomain" evidence="4">
    <location>
        <begin position="125"/>
        <end position="334"/>
    </location>
</feature>
<feature type="coiled-coil region" evidence="3">
    <location>
        <begin position="433"/>
        <end position="459"/>
    </location>
</feature>
<feature type="active site" evidence="4">
    <location>
        <position position="300"/>
    </location>
</feature>
<feature type="binding site" evidence="4">
    <location>
        <position position="129"/>
    </location>
    <ligand>
        <name>Zn(2+)</name>
        <dbReference type="ChEBI" id="CHEBI:29105"/>
        <label>1</label>
    </ligand>
</feature>
<feature type="binding site" evidence="4">
    <location>
        <position position="132"/>
    </location>
    <ligand>
        <name>Zn(2+)</name>
        <dbReference type="ChEBI" id="CHEBI:29105"/>
        <label>1</label>
    </ligand>
</feature>
<feature type="binding site" evidence="4">
    <location>
        <position position="145"/>
    </location>
    <ligand>
        <name>Zn(2+)</name>
        <dbReference type="ChEBI" id="CHEBI:29105"/>
        <label>2</label>
    </ligand>
</feature>
<feature type="binding site" evidence="4">
    <location>
        <position position="147"/>
    </location>
    <ligand>
        <name>Zn(2+)</name>
        <dbReference type="ChEBI" id="CHEBI:29105"/>
        <label>2</label>
    </ligand>
</feature>
<feature type="binding site" evidence="4">
    <location>
        <position position="150"/>
    </location>
    <ligand>
        <name>Zn(2+)</name>
        <dbReference type="ChEBI" id="CHEBI:29105"/>
        <label>1</label>
    </ligand>
</feature>
<feature type="binding site" evidence="4">
    <location>
        <position position="153"/>
    </location>
    <ligand>
        <name>Zn(2+)</name>
        <dbReference type="ChEBI" id="CHEBI:29105"/>
        <label>1</label>
    </ligand>
</feature>
<feature type="binding site" evidence="4">
    <location>
        <position position="172"/>
    </location>
    <ligand>
        <name>Zn(2+)</name>
        <dbReference type="ChEBI" id="CHEBI:29105"/>
        <label>2</label>
    </ligand>
</feature>
<feature type="binding site" evidence="4">
    <location>
        <position position="177"/>
    </location>
    <ligand>
        <name>Zn(2+)</name>
        <dbReference type="ChEBI" id="CHEBI:29105"/>
        <label>2</label>
    </ligand>
</feature>
<feature type="binding site" evidence="4">
    <location>
        <position position="218"/>
    </location>
    <ligand>
        <name>Zn(2+)</name>
        <dbReference type="ChEBI" id="CHEBI:29105"/>
        <label>3</label>
    </ligand>
</feature>
<feature type="binding site" evidence="4">
    <location>
        <position position="223"/>
    </location>
    <ligand>
        <name>Zn(2+)</name>
        <dbReference type="ChEBI" id="CHEBI:29105"/>
        <label>3</label>
    </ligand>
</feature>
<feature type="binding site" evidence="4">
    <location>
        <position position="239"/>
    </location>
    <ligand>
        <name>Zn(2+)</name>
        <dbReference type="ChEBI" id="CHEBI:29105"/>
        <label>3</label>
    </ligand>
</feature>
<feature type="binding site" evidence="4">
    <location>
        <position position="242"/>
    </location>
    <ligand>
        <name>Zn(2+)</name>
        <dbReference type="ChEBI" id="CHEBI:29105"/>
        <label>3</label>
    </ligand>
</feature>
<feature type="binding site" evidence="4">
    <location>
        <position position="247"/>
    </location>
    <ligand>
        <name>Zn(2+)</name>
        <dbReference type="ChEBI" id="CHEBI:29105"/>
        <label>4</label>
    </ligand>
</feature>
<feature type="binding site" evidence="4">
    <location>
        <position position="250"/>
    </location>
    <ligand>
        <name>Zn(2+)</name>
        <dbReference type="ChEBI" id="CHEBI:29105"/>
        <label>4</label>
    </ligand>
</feature>
<feature type="binding site" evidence="4">
    <location>
        <position position="255"/>
    </location>
    <ligand>
        <name>Zn(2+)</name>
        <dbReference type="ChEBI" id="CHEBI:29105"/>
        <label>4</label>
    </ligand>
</feature>
<feature type="binding site" evidence="4">
    <location>
        <position position="260"/>
    </location>
    <ligand>
        <name>Zn(2+)</name>
        <dbReference type="ChEBI" id="CHEBI:29105"/>
        <label>4</label>
    </ligand>
</feature>
<feature type="binding site" evidence="4">
    <location>
        <position position="287"/>
    </location>
    <ligand>
        <name>Zn(2+)</name>
        <dbReference type="ChEBI" id="CHEBI:29105"/>
        <label>5</label>
    </ligand>
</feature>
<feature type="binding site" evidence="4">
    <location>
        <position position="290"/>
    </location>
    <ligand>
        <name>Zn(2+)</name>
        <dbReference type="ChEBI" id="CHEBI:29105"/>
        <label>5</label>
    </ligand>
</feature>
<feature type="binding site" evidence="4">
    <location>
        <position position="305"/>
    </location>
    <ligand>
        <name>Zn(2+)</name>
        <dbReference type="ChEBI" id="CHEBI:29105"/>
        <label>5</label>
    </ligand>
</feature>
<feature type="binding site" evidence="4">
    <location>
        <position position="308"/>
    </location>
    <ligand>
        <name>Zn(2+)</name>
        <dbReference type="ChEBI" id="CHEBI:29105"/>
        <label>5</label>
    </ligand>
</feature>
<feature type="binding site" evidence="4">
    <location>
        <position position="313"/>
    </location>
    <ligand>
        <name>Zn(2+)</name>
        <dbReference type="ChEBI" id="CHEBI:29105"/>
        <label>6</label>
    </ligand>
</feature>
<feature type="binding site" evidence="4">
    <location>
        <position position="316"/>
    </location>
    <ligand>
        <name>Zn(2+)</name>
        <dbReference type="ChEBI" id="CHEBI:29105"/>
        <label>6</label>
    </ligand>
</feature>
<feature type="binding site" evidence="4">
    <location>
        <position position="323"/>
    </location>
    <ligand>
        <name>Zn(2+)</name>
        <dbReference type="ChEBI" id="CHEBI:29105"/>
        <label>6</label>
    </ligand>
</feature>
<feature type="binding site" evidence="4">
    <location>
        <position position="330"/>
    </location>
    <ligand>
        <name>Zn(2+)</name>
        <dbReference type="ChEBI" id="CHEBI:29105"/>
        <label>6</label>
    </ligand>
</feature>
<proteinExistence type="inferred from homology"/>
<protein>
    <recommendedName>
        <fullName>Potential E3 ubiquitin-protein ligase ariadne-2</fullName>
        <ecNumber evidence="2">2.3.2.31</ecNumber>
    </recommendedName>
    <alternativeName>
        <fullName>Protein ariadne-2</fullName>
        <shortName>Ari-2</shortName>
    </alternativeName>
    <alternativeName>
        <fullName evidence="5">RING-type E3 ubiquitin transferase ariadne-2</fullName>
    </alternativeName>
</protein>
<dbReference type="EC" id="2.3.2.31" evidence="2"/>
<dbReference type="EMBL" id="BX284604">
    <property type="protein sequence ID" value="CCD70522.1"/>
    <property type="molecule type" value="Genomic_DNA"/>
</dbReference>
<dbReference type="PIR" id="T29562">
    <property type="entry name" value="T29562"/>
</dbReference>
<dbReference type="RefSeq" id="NP_500829.2">
    <property type="nucleotide sequence ID" value="NM_068428.5"/>
</dbReference>
<dbReference type="SMR" id="Q22431"/>
<dbReference type="BioGRID" id="42461">
    <property type="interactions" value="2"/>
</dbReference>
<dbReference type="FunCoup" id="Q22431">
    <property type="interactions" value="3021"/>
</dbReference>
<dbReference type="STRING" id="6239.T12E12.1.1"/>
<dbReference type="iPTMnet" id="Q22431"/>
<dbReference type="PaxDb" id="6239-T12E12.1"/>
<dbReference type="PeptideAtlas" id="Q22431"/>
<dbReference type="EnsemblMetazoa" id="T12E12.1.1">
    <property type="protein sequence ID" value="T12E12.1.1"/>
    <property type="gene ID" value="WBGene00020462"/>
</dbReference>
<dbReference type="GeneID" id="177339"/>
<dbReference type="KEGG" id="cel:CELE_T12E12.1"/>
<dbReference type="UCSC" id="T12E12.1">
    <property type="organism name" value="c. elegans"/>
</dbReference>
<dbReference type="AGR" id="WB:WBGene00020462"/>
<dbReference type="CTD" id="37542"/>
<dbReference type="WormBase" id="T12E12.1">
    <property type="protein sequence ID" value="CE31725"/>
    <property type="gene ID" value="WBGene00020462"/>
    <property type="gene designation" value="ari-2"/>
</dbReference>
<dbReference type="eggNOG" id="KOG1812">
    <property type="taxonomic scope" value="Eukaryota"/>
</dbReference>
<dbReference type="GeneTree" id="ENSGT00940000154875"/>
<dbReference type="HOGENOM" id="CLU_009823_0_1_1"/>
<dbReference type="InParanoid" id="Q22431"/>
<dbReference type="OMA" id="PYAYYMD"/>
<dbReference type="OrthoDB" id="10009520at2759"/>
<dbReference type="PhylomeDB" id="Q22431"/>
<dbReference type="Reactome" id="R-CEL-983168">
    <property type="pathway name" value="Antigen processing: Ubiquitination &amp; Proteasome degradation"/>
</dbReference>
<dbReference type="PRO" id="PR:Q22431"/>
<dbReference type="Proteomes" id="UP000001940">
    <property type="component" value="Chromosome IV"/>
</dbReference>
<dbReference type="Bgee" id="WBGene00020462">
    <property type="expression patterns" value="Expressed in pharyngeal muscle cell (C elegans) and 4 other cell types or tissues"/>
</dbReference>
<dbReference type="GO" id="GO:0005737">
    <property type="term" value="C:cytoplasm"/>
    <property type="evidence" value="ECO:0000318"/>
    <property type="project" value="GO_Central"/>
</dbReference>
<dbReference type="GO" id="GO:0005634">
    <property type="term" value="C:nucleus"/>
    <property type="evidence" value="ECO:0007669"/>
    <property type="project" value="UniProtKB-SubCell"/>
</dbReference>
<dbReference type="GO" id="GO:0000151">
    <property type="term" value="C:ubiquitin ligase complex"/>
    <property type="evidence" value="ECO:0000318"/>
    <property type="project" value="GO_Central"/>
</dbReference>
<dbReference type="GO" id="GO:0031624">
    <property type="term" value="F:ubiquitin conjugating enzyme binding"/>
    <property type="evidence" value="ECO:0000318"/>
    <property type="project" value="GO_Central"/>
</dbReference>
<dbReference type="GO" id="GO:0061630">
    <property type="term" value="F:ubiquitin protein ligase activity"/>
    <property type="evidence" value="ECO:0000318"/>
    <property type="project" value="GO_Central"/>
</dbReference>
<dbReference type="GO" id="GO:0008270">
    <property type="term" value="F:zinc ion binding"/>
    <property type="evidence" value="ECO:0007669"/>
    <property type="project" value="UniProtKB-KW"/>
</dbReference>
<dbReference type="GO" id="GO:0016567">
    <property type="term" value="P:protein ubiquitination"/>
    <property type="evidence" value="ECO:0007669"/>
    <property type="project" value="InterPro"/>
</dbReference>
<dbReference type="GO" id="GO:0006511">
    <property type="term" value="P:ubiquitin-dependent protein catabolic process"/>
    <property type="evidence" value="ECO:0000318"/>
    <property type="project" value="GO_Central"/>
</dbReference>
<dbReference type="CDD" id="cd20344">
    <property type="entry name" value="BRcat_RBR_TRIAD1"/>
    <property type="match status" value="1"/>
</dbReference>
<dbReference type="CDD" id="cd20360">
    <property type="entry name" value="Rcat_RBR_TRIAD1"/>
    <property type="match status" value="1"/>
</dbReference>
<dbReference type="CDD" id="cd16773">
    <property type="entry name" value="RING-HC_RBR_TRIAD1"/>
    <property type="match status" value="1"/>
</dbReference>
<dbReference type="FunFam" id="1.20.120.1750:FF:000002">
    <property type="entry name" value="RBR-type E3 ubiquitin transferase"/>
    <property type="match status" value="1"/>
</dbReference>
<dbReference type="FunFam" id="3.30.40.10:FF:000019">
    <property type="entry name" value="RBR-type E3 ubiquitin transferase"/>
    <property type="match status" value="1"/>
</dbReference>
<dbReference type="Gene3D" id="1.20.120.1750">
    <property type="match status" value="1"/>
</dbReference>
<dbReference type="Gene3D" id="3.30.40.10">
    <property type="entry name" value="Zinc/RING finger domain, C3HC4 (zinc finger)"/>
    <property type="match status" value="1"/>
</dbReference>
<dbReference type="InterPro" id="IPR045840">
    <property type="entry name" value="Ariadne"/>
</dbReference>
<dbReference type="InterPro" id="IPR047555">
    <property type="entry name" value="BRcat_RBR_TRIAD1"/>
</dbReference>
<dbReference type="InterPro" id="IPR031127">
    <property type="entry name" value="E3_UB_ligase_RBR"/>
</dbReference>
<dbReference type="InterPro" id="IPR002867">
    <property type="entry name" value="IBR_dom"/>
</dbReference>
<dbReference type="InterPro" id="IPR047556">
    <property type="entry name" value="Rcat_RBR_TRIAD1"/>
</dbReference>
<dbReference type="InterPro" id="IPR044066">
    <property type="entry name" value="TRIAD_supradom"/>
</dbReference>
<dbReference type="InterPro" id="IPR013083">
    <property type="entry name" value="Znf_RING/FYVE/PHD"/>
</dbReference>
<dbReference type="PANTHER" id="PTHR11685">
    <property type="entry name" value="RBR FAMILY RING FINGER AND IBR DOMAIN-CONTAINING"/>
    <property type="match status" value="1"/>
</dbReference>
<dbReference type="Pfam" id="PF19422">
    <property type="entry name" value="Ariadne"/>
    <property type="match status" value="1"/>
</dbReference>
<dbReference type="Pfam" id="PF01485">
    <property type="entry name" value="IBR"/>
    <property type="match status" value="1"/>
</dbReference>
<dbReference type="Pfam" id="PF22191">
    <property type="entry name" value="IBR_1"/>
    <property type="match status" value="1"/>
</dbReference>
<dbReference type="SMART" id="SM00647">
    <property type="entry name" value="IBR"/>
    <property type="match status" value="2"/>
</dbReference>
<dbReference type="SUPFAM" id="SSF57850">
    <property type="entry name" value="RING/U-box"/>
    <property type="match status" value="3"/>
</dbReference>
<dbReference type="PROSITE" id="PS51873">
    <property type="entry name" value="TRIAD"/>
    <property type="match status" value="1"/>
</dbReference>
<comment type="function">
    <text evidence="1">Might act as an E3 ubiquitin-protein ligase, or as part of E3 complex, which accepts ubiquitin from specific E2 ubiquitin-conjugating enzymes, such as UBC-2/UBE2L3, and then transfers it to substrates.</text>
</comment>
<comment type="catalytic activity">
    <reaction evidence="2">
        <text>[E2 ubiquitin-conjugating enzyme]-S-ubiquitinyl-L-cysteine + [acceptor protein]-L-lysine = [E2 ubiquitin-conjugating enzyme]-L-cysteine + [acceptor protein]-N(6)-ubiquitinyl-L-lysine.</text>
        <dbReference type="EC" id="2.3.2.31"/>
    </reaction>
</comment>
<comment type="subcellular location">
    <subcellularLocation>
        <location evidence="1">Nucleus</location>
    </subcellularLocation>
</comment>
<comment type="domain">
    <text evidence="2">Members of the RBR family are atypical E3 ligases. They interact with the E2 conjugating enzyme UBE2L3 and function like HECT-type E3 enzymes: they bind E2s via the first RING-type zinc finger, but require an obligate trans-thiolation step during the ubiquitin transfer, requiring a conserved active site Cys residue in the second RING-type zinc finger. The active site probably forms a thioester intermediate with ubiquitin taken from the active-site cysteine of the E2 before ultimately transferring it to a Lys residue on the substrate.</text>
</comment>
<comment type="similarity">
    <text evidence="5">Belongs to the RBR family. Ariadne subfamily.</text>
</comment>